<feature type="chain" id="PRO_0000440776" description="Leucoanthocyanidin dioxygenase 1">
    <location>
        <begin position="1"/>
        <end position="375"/>
    </location>
</feature>
<feature type="domain" description="Fe2OG dioxygenase" evidence="2">
    <location>
        <begin position="218"/>
        <end position="317"/>
    </location>
</feature>
<feature type="binding site" evidence="2">
    <location>
        <position position="242"/>
    </location>
    <ligand>
        <name>Fe cation</name>
        <dbReference type="ChEBI" id="CHEBI:24875"/>
    </ligand>
</feature>
<feature type="binding site" evidence="2">
    <location>
        <position position="244"/>
    </location>
    <ligand>
        <name>Fe cation</name>
        <dbReference type="ChEBI" id="CHEBI:24875"/>
    </ligand>
</feature>
<feature type="binding site" evidence="2">
    <location>
        <position position="298"/>
    </location>
    <ligand>
        <name>Fe cation</name>
        <dbReference type="ChEBI" id="CHEBI:24875"/>
    </ligand>
</feature>
<feature type="binding site" evidence="2">
    <location>
        <position position="308"/>
    </location>
    <ligand>
        <name>2-oxoglutarate</name>
        <dbReference type="ChEBI" id="CHEBI:16810"/>
    </ligand>
</feature>
<feature type="sequence conflict" description="In Ref. 1; CAA69252." evidence="5" ref="1">
    <original>V</original>
    <variation>A</variation>
    <location>
        <position position="4"/>
    </location>
</feature>
<feature type="sequence conflict" description="In Ref. 1; CAA69252." evidence="5" ref="1">
    <original>V</original>
    <variation>A</variation>
    <location>
        <position position="16"/>
    </location>
</feature>
<feature type="sequence conflict" description="In Ref. 1; CAA69252." evidence="5" ref="1">
    <original>I</original>
    <variation>M</variation>
    <location>
        <position position="84"/>
    </location>
</feature>
<accession>A2WQ39</accession>
<accession>P93403</accession>
<keyword id="KW-0223">Dioxygenase</keyword>
<keyword id="KW-0284">Flavonoid biosynthesis</keyword>
<keyword id="KW-0408">Iron</keyword>
<keyword id="KW-0479">Metal-binding</keyword>
<keyword id="KW-0560">Oxidoreductase</keyword>
<keyword id="KW-1185">Reference proteome</keyword>
<keyword id="KW-0847">Vitamin C</keyword>
<protein>
    <recommendedName>
        <fullName evidence="5">Leucoanthocyanidin dioxygenase 1</fullName>
        <shortName evidence="5">LDOX1</shortName>
        <shortName evidence="5">Leucocyanidin oxygenase 1</shortName>
        <ecNumber evidence="3">1.14.20.4</ecNumber>
    </recommendedName>
    <alternativeName>
        <fullName evidence="4">Anthocyanidin synthase</fullName>
        <shortName evidence="4">OsANS</shortName>
    </alternativeName>
    <alternativeName>
        <fullName evidence="5">Anthocyanidin synthase 1</fullName>
        <shortName evidence="5">OsANS1</shortName>
    </alternativeName>
    <alternativeName>
        <fullName evidence="5">Leucoanthocyanidin hydroxylase 1</fullName>
    </alternativeName>
</protein>
<organism>
    <name type="scientific">Oryza sativa subsp. indica</name>
    <name type="common">Rice</name>
    <dbReference type="NCBI Taxonomy" id="39946"/>
    <lineage>
        <taxon>Eukaryota</taxon>
        <taxon>Viridiplantae</taxon>
        <taxon>Streptophyta</taxon>
        <taxon>Embryophyta</taxon>
        <taxon>Tracheophyta</taxon>
        <taxon>Spermatophyta</taxon>
        <taxon>Magnoliopsida</taxon>
        <taxon>Liliopsida</taxon>
        <taxon>Poales</taxon>
        <taxon>Poaceae</taxon>
        <taxon>BOP clade</taxon>
        <taxon>Oryzoideae</taxon>
        <taxon>Oryzeae</taxon>
        <taxon>Oryzinae</taxon>
        <taxon>Oryza</taxon>
        <taxon>Oryza sativa</taxon>
    </lineage>
</organism>
<name>ANS1_ORYSI</name>
<reference key="1">
    <citation type="journal article" date="2007" name="Metab. Eng.">
        <title>Novel transgenic rice overexpressing anthocyanidin synthase accumulates a mixture of flavonoids leading to an increased antioxidant potential.</title>
        <authorList>
            <person name="Reddy A.M."/>
            <person name="Reddy V.S."/>
            <person name="Scheffler B.E."/>
            <person name="Wienanad U."/>
            <person name="Reddy A.R."/>
        </authorList>
    </citation>
    <scope>NUCLEOTIDE SEQUENCE [MRNA]</scope>
    <scope>FUNCTION</scope>
    <scope>CATALYTIC ACTIVITY</scope>
    <scope>COFACTOR</scope>
    <scope>BIOTECHNOLOGY</scope>
    <source>
        <strain>cv. Purple Puttu</strain>
        <tissue>Shoot</tissue>
    </source>
</reference>
<reference key="2">
    <citation type="journal article" date="2005" name="PLoS Biol.">
        <title>The genomes of Oryza sativa: a history of duplications.</title>
        <authorList>
            <person name="Yu J."/>
            <person name="Wang J."/>
            <person name="Lin W."/>
            <person name="Li S."/>
            <person name="Li H."/>
            <person name="Zhou J."/>
            <person name="Ni P."/>
            <person name="Dong W."/>
            <person name="Hu S."/>
            <person name="Zeng C."/>
            <person name="Zhang J."/>
            <person name="Zhang Y."/>
            <person name="Li R."/>
            <person name="Xu Z."/>
            <person name="Li S."/>
            <person name="Li X."/>
            <person name="Zheng H."/>
            <person name="Cong L."/>
            <person name="Lin L."/>
            <person name="Yin J."/>
            <person name="Geng J."/>
            <person name="Li G."/>
            <person name="Shi J."/>
            <person name="Liu J."/>
            <person name="Lv H."/>
            <person name="Li J."/>
            <person name="Wang J."/>
            <person name="Deng Y."/>
            <person name="Ran L."/>
            <person name="Shi X."/>
            <person name="Wang X."/>
            <person name="Wu Q."/>
            <person name="Li C."/>
            <person name="Ren X."/>
            <person name="Wang J."/>
            <person name="Wang X."/>
            <person name="Li D."/>
            <person name="Liu D."/>
            <person name="Zhang X."/>
            <person name="Ji Z."/>
            <person name="Zhao W."/>
            <person name="Sun Y."/>
            <person name="Zhang Z."/>
            <person name="Bao J."/>
            <person name="Han Y."/>
            <person name="Dong L."/>
            <person name="Ji J."/>
            <person name="Chen P."/>
            <person name="Wu S."/>
            <person name="Liu J."/>
            <person name="Xiao Y."/>
            <person name="Bu D."/>
            <person name="Tan J."/>
            <person name="Yang L."/>
            <person name="Ye C."/>
            <person name="Zhang J."/>
            <person name="Xu J."/>
            <person name="Zhou Y."/>
            <person name="Yu Y."/>
            <person name="Zhang B."/>
            <person name="Zhuang S."/>
            <person name="Wei H."/>
            <person name="Liu B."/>
            <person name="Lei M."/>
            <person name="Yu H."/>
            <person name="Li Y."/>
            <person name="Xu H."/>
            <person name="Wei S."/>
            <person name="He X."/>
            <person name="Fang L."/>
            <person name="Zhang Z."/>
            <person name="Zhang Y."/>
            <person name="Huang X."/>
            <person name="Su Z."/>
            <person name="Tong W."/>
            <person name="Li J."/>
            <person name="Tong Z."/>
            <person name="Li S."/>
            <person name="Ye J."/>
            <person name="Wang L."/>
            <person name="Fang L."/>
            <person name="Lei T."/>
            <person name="Chen C.-S."/>
            <person name="Chen H.-C."/>
            <person name="Xu Z."/>
            <person name="Li H."/>
            <person name="Huang H."/>
            <person name="Zhang F."/>
            <person name="Xu H."/>
            <person name="Li N."/>
            <person name="Zhao C."/>
            <person name="Li S."/>
            <person name="Dong L."/>
            <person name="Huang Y."/>
            <person name="Li L."/>
            <person name="Xi Y."/>
            <person name="Qi Q."/>
            <person name="Li W."/>
            <person name="Zhang B."/>
            <person name="Hu W."/>
            <person name="Zhang Y."/>
            <person name="Tian X."/>
            <person name="Jiao Y."/>
            <person name="Liang X."/>
            <person name="Jin J."/>
            <person name="Gao L."/>
            <person name="Zheng W."/>
            <person name="Hao B."/>
            <person name="Liu S.-M."/>
            <person name="Wang W."/>
            <person name="Yuan L."/>
            <person name="Cao M."/>
            <person name="McDermott J."/>
            <person name="Samudrala R."/>
            <person name="Wang J."/>
            <person name="Wong G.K.-S."/>
            <person name="Yang H."/>
        </authorList>
    </citation>
    <scope>NUCLEOTIDE SEQUENCE [LARGE SCALE GENOMIC DNA]</scope>
    <source>
        <strain>cv. 93-11</strain>
    </source>
</reference>
<evidence type="ECO:0000250" key="1">
    <source>
        <dbReference type="UniProtKB" id="Q96323"/>
    </source>
</evidence>
<evidence type="ECO:0000255" key="2">
    <source>
        <dbReference type="PROSITE-ProRule" id="PRU00805"/>
    </source>
</evidence>
<evidence type="ECO:0000269" key="3">
    <source>
    </source>
</evidence>
<evidence type="ECO:0000303" key="4">
    <source>
    </source>
</evidence>
<evidence type="ECO:0000305" key="5"/>
<evidence type="ECO:0000312" key="6">
    <source>
        <dbReference type="EMBL" id="EAY74085.1"/>
    </source>
</evidence>
<proteinExistence type="evidence at protein level"/>
<dbReference type="EC" id="1.14.20.4" evidence="3"/>
<dbReference type="EMBL" id="Y07955">
    <property type="protein sequence ID" value="CAA69252.1"/>
    <property type="molecule type" value="mRNA"/>
</dbReference>
<dbReference type="EMBL" id="CM000126">
    <property type="protein sequence ID" value="EAY74085.1"/>
    <property type="molecule type" value="Genomic_DNA"/>
</dbReference>
<dbReference type="PIR" id="T03593">
    <property type="entry name" value="T03593"/>
</dbReference>
<dbReference type="SMR" id="A2WQ39"/>
<dbReference type="STRING" id="39946.A2WQ39"/>
<dbReference type="EnsemblPlants" id="BGIOSGA001621-TA">
    <property type="protein sequence ID" value="BGIOSGA001621-PA"/>
    <property type="gene ID" value="BGIOSGA001621"/>
</dbReference>
<dbReference type="Gramene" id="BGIOSGA001621-TA">
    <property type="protein sequence ID" value="BGIOSGA001621-PA"/>
    <property type="gene ID" value="BGIOSGA001621"/>
</dbReference>
<dbReference type="HOGENOM" id="CLU_010119_16_2_1"/>
<dbReference type="OMA" id="AGMRILH"/>
<dbReference type="UniPathway" id="UPA00009"/>
<dbReference type="Proteomes" id="UP000007015">
    <property type="component" value="Chromosome 1"/>
</dbReference>
<dbReference type="GO" id="GO:0031418">
    <property type="term" value="F:L-ascorbic acid binding"/>
    <property type="evidence" value="ECO:0007669"/>
    <property type="project" value="UniProtKB-KW"/>
</dbReference>
<dbReference type="GO" id="GO:0050589">
    <property type="term" value="F:leucocyanidin oxygenase activity"/>
    <property type="evidence" value="ECO:0007669"/>
    <property type="project" value="UniProtKB-EC"/>
</dbReference>
<dbReference type="GO" id="GO:0046872">
    <property type="term" value="F:metal ion binding"/>
    <property type="evidence" value="ECO:0007669"/>
    <property type="project" value="UniProtKB-KW"/>
</dbReference>
<dbReference type="GO" id="GO:0009718">
    <property type="term" value="P:anthocyanin-containing compound biosynthetic process"/>
    <property type="evidence" value="ECO:0007669"/>
    <property type="project" value="UniProtKB-UniPathway"/>
</dbReference>
<dbReference type="FunFam" id="2.60.120.330:FF:000009">
    <property type="entry name" value="Flavonol synthase"/>
    <property type="match status" value="1"/>
</dbReference>
<dbReference type="Gene3D" id="2.60.120.330">
    <property type="entry name" value="B-lactam Antibiotic, Isopenicillin N Synthase, Chain"/>
    <property type="match status" value="1"/>
</dbReference>
<dbReference type="InterPro" id="IPR026992">
    <property type="entry name" value="DIOX_N"/>
</dbReference>
<dbReference type="InterPro" id="IPR044861">
    <property type="entry name" value="IPNS-like_FE2OG_OXY"/>
</dbReference>
<dbReference type="InterPro" id="IPR027443">
    <property type="entry name" value="IPNS-like_sf"/>
</dbReference>
<dbReference type="InterPro" id="IPR050231">
    <property type="entry name" value="Iron_ascorbate_oxido_reductase"/>
</dbReference>
<dbReference type="InterPro" id="IPR005123">
    <property type="entry name" value="Oxoglu/Fe-dep_dioxygenase_dom"/>
</dbReference>
<dbReference type="PANTHER" id="PTHR47990">
    <property type="entry name" value="2-OXOGLUTARATE (2OG) AND FE(II)-DEPENDENT OXYGENASE SUPERFAMILY PROTEIN-RELATED"/>
    <property type="match status" value="1"/>
</dbReference>
<dbReference type="Pfam" id="PF03171">
    <property type="entry name" value="2OG-FeII_Oxy"/>
    <property type="match status" value="1"/>
</dbReference>
<dbReference type="Pfam" id="PF14226">
    <property type="entry name" value="DIOX_N"/>
    <property type="match status" value="1"/>
</dbReference>
<dbReference type="PRINTS" id="PR00682">
    <property type="entry name" value="IPNSYNTHASE"/>
</dbReference>
<dbReference type="SUPFAM" id="SSF51197">
    <property type="entry name" value="Clavaminate synthase-like"/>
    <property type="match status" value="1"/>
</dbReference>
<dbReference type="PROSITE" id="PS51471">
    <property type="entry name" value="FE2OG_OXY"/>
    <property type="match status" value="1"/>
</dbReference>
<comment type="function">
    <text evidence="3">Involved in anthocyanin and protoanthocyanidin biosynthesis by catalyzing the oxidation of leucoanthocyanidins into anthocyanidins. Is able to synthesize anthocyanin pigments from leucoanthocyanidins in aleurone tissue. Converts dihydroquercetin to quercetin in vitro.</text>
</comment>
<comment type="catalytic activity">
    <reaction evidence="3">
        <text>a (2R,3S,4S)-leucoanthocyanidin + 2-oxoglutarate + O2 = a 4-H-anthocyanidin with a 3-hydroxy group + succinate + CO2 + 2 H2O</text>
        <dbReference type="Rhea" id="RHEA:54432"/>
        <dbReference type="ChEBI" id="CHEBI:15377"/>
        <dbReference type="ChEBI" id="CHEBI:15379"/>
        <dbReference type="ChEBI" id="CHEBI:16526"/>
        <dbReference type="ChEBI" id="CHEBI:16810"/>
        <dbReference type="ChEBI" id="CHEBI:30031"/>
        <dbReference type="ChEBI" id="CHEBI:138176"/>
        <dbReference type="ChEBI" id="CHEBI:138177"/>
        <dbReference type="EC" id="1.14.20.4"/>
    </reaction>
</comment>
<comment type="cofactor">
    <cofactor evidence="1">
        <name>L-ascorbate</name>
        <dbReference type="ChEBI" id="CHEBI:38290"/>
    </cofactor>
    <text evidence="1">Binds 1 ascorbate molecule per subunit.</text>
</comment>
<comment type="cofactor">
    <cofactor evidence="2">
        <name>Fe(2+)</name>
        <dbReference type="ChEBI" id="CHEBI:29033"/>
    </cofactor>
    <text evidence="2">Binds 1 Fe(2+) ion per subunit.</text>
</comment>
<comment type="pathway">
    <text evidence="5">Pigment biosynthesis; anthocyanin biosynthesis.</text>
</comment>
<comment type="biotechnology">
    <text evidence="3">Plants over-expressing ANS1 have increased accumulation of a mixture of flavonoids and anthocyanins, with a concomitant decrease in proanthocyanidins, and could represent an enhanced antioxidant potential.</text>
</comment>
<comment type="similarity">
    <text evidence="5">Belongs to the iron/ascorbate-dependent oxidoreductase family.</text>
</comment>
<gene>
    <name evidence="5" type="primary">ANS1</name>
    <name evidence="4" type="synonym">ANS</name>
    <name evidence="6" type="ORF">OsI_01973</name>
</gene>
<sequence length="375" mass="40637">MTDVELRVEALSLSGVSAIPPEYVRPEEERADLGDALELARAASDDDATARIPVVDISAFDNDGDGRHACVEAVRAAAEEWGVIHIAGHGLPGDVLGRLRAAGEAFFALPIAEKEAYANDPAAGRLQGYGSKLAANASGKREWEDYLFHLVHPDHLADHSLWPANPPEYVPVSRDFGGRVRTLASKLLAILSLGLGLPEETLERRLRGHELAGVDDDLLLQLKINYYPRCPRPDLAVGVEAHTDVSALSFILHNGVPGLQVHHAGSWVTARPEPGTIVVHVGDALEILTNGRYTSVLHRGLVSRDAVRLSWVVFCEPPPESVLLQPVQELLADGAGKPLFAPRTFKQHVQRKLFKKLKDQQDNNAAAASNGMITK</sequence>